<gene>
    <name evidence="1" type="primary">tusA</name>
    <name type="ordered locus">EcolC_0246</name>
</gene>
<keyword id="KW-0963">Cytoplasm</keyword>
<keyword id="KW-0819">tRNA processing</keyword>
<dbReference type="EMBL" id="CP000946">
    <property type="protein sequence ID" value="ACA75925.1"/>
    <property type="molecule type" value="Genomic_DNA"/>
</dbReference>
<dbReference type="RefSeq" id="WP_000130621.1">
    <property type="nucleotide sequence ID" value="NZ_MTFT01000017.1"/>
</dbReference>
<dbReference type="BMRB" id="B1J0G0"/>
<dbReference type="SMR" id="B1J0G0"/>
<dbReference type="GeneID" id="93778521"/>
<dbReference type="KEGG" id="ecl:EcolC_0246"/>
<dbReference type="HOGENOM" id="CLU_165255_5_0_6"/>
<dbReference type="GO" id="GO:0005737">
    <property type="term" value="C:cytoplasm"/>
    <property type="evidence" value="ECO:0007669"/>
    <property type="project" value="UniProtKB-SubCell"/>
</dbReference>
<dbReference type="GO" id="GO:0097163">
    <property type="term" value="F:sulfur carrier activity"/>
    <property type="evidence" value="ECO:0007669"/>
    <property type="project" value="UniProtKB-UniRule"/>
</dbReference>
<dbReference type="GO" id="GO:0002143">
    <property type="term" value="P:tRNA wobble position uridine thiolation"/>
    <property type="evidence" value="ECO:0007669"/>
    <property type="project" value="InterPro"/>
</dbReference>
<dbReference type="CDD" id="cd03423">
    <property type="entry name" value="SirA"/>
    <property type="match status" value="1"/>
</dbReference>
<dbReference type="FunFam" id="3.30.110.40:FF:000002">
    <property type="entry name" value="Sulfur carrier protein TusA"/>
    <property type="match status" value="1"/>
</dbReference>
<dbReference type="Gene3D" id="3.30.110.40">
    <property type="entry name" value="TusA-like domain"/>
    <property type="match status" value="1"/>
</dbReference>
<dbReference type="HAMAP" id="MF_00413">
    <property type="entry name" value="Thiourid_synth_A"/>
    <property type="match status" value="1"/>
</dbReference>
<dbReference type="InterPro" id="IPR022931">
    <property type="entry name" value="Sulphur_carrier_TusA"/>
</dbReference>
<dbReference type="InterPro" id="IPR001455">
    <property type="entry name" value="TusA-like"/>
</dbReference>
<dbReference type="InterPro" id="IPR036868">
    <property type="entry name" value="TusA-like_sf"/>
</dbReference>
<dbReference type="NCBIfam" id="NF001423">
    <property type="entry name" value="PRK00299.1"/>
    <property type="match status" value="1"/>
</dbReference>
<dbReference type="PANTHER" id="PTHR33279:SF2">
    <property type="entry name" value="SULFUR CARRIER PROTEIN TUSA"/>
    <property type="match status" value="1"/>
</dbReference>
<dbReference type="PANTHER" id="PTHR33279">
    <property type="entry name" value="SULFUR CARRIER PROTEIN YEDF-RELATED"/>
    <property type="match status" value="1"/>
</dbReference>
<dbReference type="Pfam" id="PF01206">
    <property type="entry name" value="TusA"/>
    <property type="match status" value="1"/>
</dbReference>
<dbReference type="SUPFAM" id="SSF64307">
    <property type="entry name" value="SirA-like"/>
    <property type="match status" value="1"/>
</dbReference>
<dbReference type="PROSITE" id="PS01148">
    <property type="entry name" value="UPF0033"/>
    <property type="match status" value="1"/>
</dbReference>
<feature type="chain" id="PRO_1000080495" description="Sulfur carrier protein TusA">
    <location>
        <begin position="1"/>
        <end position="81"/>
    </location>
</feature>
<feature type="active site" description="Cysteine persulfide intermediate" evidence="1">
    <location>
        <position position="19"/>
    </location>
</feature>
<organism>
    <name type="scientific">Escherichia coli (strain ATCC 8739 / DSM 1576 / NBRC 3972 / NCIMB 8545 / WDCM 00012 / Crooks)</name>
    <dbReference type="NCBI Taxonomy" id="481805"/>
    <lineage>
        <taxon>Bacteria</taxon>
        <taxon>Pseudomonadati</taxon>
        <taxon>Pseudomonadota</taxon>
        <taxon>Gammaproteobacteria</taxon>
        <taxon>Enterobacterales</taxon>
        <taxon>Enterobacteriaceae</taxon>
        <taxon>Escherichia</taxon>
    </lineage>
</organism>
<name>TUSA_ECOLC</name>
<sequence>MTDLFSSPDHTLDALGLRCPEPVMMVRKTVRNMQPGETLLIIADDPATTRDIPGFCTFMEHELVAKETDGLPYRYLIRKGG</sequence>
<comment type="function">
    <text evidence="1">Sulfur carrier protein involved in sulfur trafficking in the cell. Part of a sulfur-relay system required for 2-thiolation during synthesis of 2-thiouridine of the modified wobble base 5-methylaminomethyl-2-thiouridine (mnm(5)s(2)U) in tRNA. Interacts with IscS and stimulates its cysteine desulfurase activity. Accepts an activated sulfur from IscS, which is then transferred to TusD, and thus determines the direction of sulfur flow from IscS to 2-thiouridine formation. Also appears to be involved in sulfur transfer for the biosynthesis of molybdopterin.</text>
</comment>
<comment type="pathway">
    <text evidence="1">tRNA modification.</text>
</comment>
<comment type="subunit">
    <text evidence="1">Interacts with IscS.</text>
</comment>
<comment type="subcellular location">
    <subcellularLocation>
        <location evidence="1">Cytoplasm</location>
    </subcellularLocation>
</comment>
<comment type="similarity">
    <text evidence="1">Belongs to the sulfur carrier protein TusA family.</text>
</comment>
<accession>B1J0G0</accession>
<evidence type="ECO:0000255" key="1">
    <source>
        <dbReference type="HAMAP-Rule" id="MF_00413"/>
    </source>
</evidence>
<proteinExistence type="inferred from homology"/>
<reference key="1">
    <citation type="submission" date="2008-02" db="EMBL/GenBank/DDBJ databases">
        <title>Complete sequence of Escherichia coli C str. ATCC 8739.</title>
        <authorList>
            <person name="Copeland A."/>
            <person name="Lucas S."/>
            <person name="Lapidus A."/>
            <person name="Glavina del Rio T."/>
            <person name="Dalin E."/>
            <person name="Tice H."/>
            <person name="Bruce D."/>
            <person name="Goodwin L."/>
            <person name="Pitluck S."/>
            <person name="Kiss H."/>
            <person name="Brettin T."/>
            <person name="Detter J.C."/>
            <person name="Han C."/>
            <person name="Kuske C.R."/>
            <person name="Schmutz J."/>
            <person name="Larimer F."/>
            <person name="Land M."/>
            <person name="Hauser L."/>
            <person name="Kyrpides N."/>
            <person name="Mikhailova N."/>
            <person name="Ingram L."/>
            <person name="Richardson P."/>
        </authorList>
    </citation>
    <scope>NUCLEOTIDE SEQUENCE [LARGE SCALE GENOMIC DNA]</scope>
    <source>
        <strain>ATCC 8739 / DSM 1576 / NBRC 3972 / NCIMB 8545 / WDCM 00012 / Crooks</strain>
    </source>
</reference>
<protein>
    <recommendedName>
        <fullName evidence="1">Sulfur carrier protein TusA</fullName>
    </recommendedName>
    <alternativeName>
        <fullName evidence="1">Sulfur mediator TusA</fullName>
    </alternativeName>
    <alternativeName>
        <fullName evidence="1">Sulfur transfer protein TusA</fullName>
    </alternativeName>
    <alternativeName>
        <fullName evidence="1">tRNA 2-thiouridine synthesizing protein A</fullName>
    </alternativeName>
</protein>